<feature type="chain" id="PRO_0000065868" description="Single-strand DNA-binding protein">
    <location>
        <begin position="1"/>
        <end position="533"/>
    </location>
</feature>
<feature type="region of interest" description="Disordered" evidence="2">
    <location>
        <begin position="1"/>
        <end position="67"/>
    </location>
</feature>
<feature type="region of interest" description="Disordered" evidence="2">
    <location>
        <begin position="504"/>
        <end position="533"/>
    </location>
</feature>
<feature type="compositionally biased region" description="Basic and acidic residues" evidence="2">
    <location>
        <begin position="1"/>
        <end position="10"/>
    </location>
</feature>
<feature type="compositionally biased region" description="Polar residues" evidence="2">
    <location>
        <begin position="16"/>
        <end position="42"/>
    </location>
</feature>
<feature type="compositionally biased region" description="Low complexity" evidence="2">
    <location>
        <begin position="53"/>
        <end position="63"/>
    </location>
</feature>
<feature type="compositionally biased region" description="Basic and acidic residues" evidence="2">
    <location>
        <begin position="515"/>
        <end position="525"/>
    </location>
</feature>
<reference key="1">
    <citation type="journal article" date="1987" name="Nucleic Acids Res.">
        <title>Characterization of the virE operon of the Agrobacterium Ti plasmid pTiA6.</title>
        <authorList>
            <person name="Winans S.C."/>
            <person name="Allenza P."/>
            <person name="Stachel S.E."/>
            <person name="McBride K.E."/>
            <person name="Nester E.W."/>
        </authorList>
    </citation>
    <scope>NUCLEOTIDE SEQUENCE [GENOMIC DNA]</scope>
</reference>
<reference key="2">
    <citation type="submission" date="2000-03" db="EMBL/GenBank/DDBJ databases">
        <authorList>
            <person name="Winans S.C."/>
            <person name="Zhu J."/>
            <person name="Oger P.M."/>
            <person name="Schrammeijer B."/>
            <person name="Hooykaas P.J."/>
            <person name="Farrand S.K."/>
        </authorList>
    </citation>
    <scope>SEQUENCE REVISION TO 358</scope>
</reference>
<reference key="3">
    <citation type="journal article" date="1988" name="J. Bacteriol.">
        <title>Genetic analysis of the virE operon of the Agrobacterium Ti plasmid pTiA6.</title>
        <authorList>
            <person name="McBride K.E."/>
            <person name="Knauf V.C."/>
        </authorList>
    </citation>
    <scope>NUCLEOTIDE SEQUENCE [GENOMIC DNA] OF 1-12</scope>
</reference>
<reference key="4">
    <citation type="journal article" date="1988" name="Science">
        <title>Single-stranded DNA binding protein encoded by the virE locus of Agrobacterium tumefaciens.</title>
        <authorList>
            <person name="Citovsky V."/>
            <person name="de Vos G."/>
            <person name="Zambryski P."/>
        </authorList>
    </citation>
    <scope>FUNCTION</scope>
</reference>
<reference key="5">
    <citation type="journal article" date="1996" name="Proc. Natl. Acad. Sci. U.S.A.">
        <title>Agrobacterium VirE2 protein mediates nuclear uptake of single-stranded DNA in plant cells.</title>
        <authorList>
            <person name="Zupan J.R."/>
            <person name="Citovsky V."/>
            <person name="Zambryski P."/>
        </authorList>
    </citation>
    <scope>FUNCTION</scope>
</reference>
<reference key="6">
    <citation type="journal article" date="1992" name="Science">
        <title>Nuclear localization of Agrobacterium VirE2 protein in plant cells.</title>
        <authorList>
            <person name="Citovsky V."/>
            <person name="Zupan J."/>
            <person name="Warnick D."/>
            <person name="Zambryski P."/>
        </authorList>
    </citation>
    <scope>SUBCELLULAR LOCATION</scope>
</reference>
<reference key="7">
    <citation type="journal article" date="2001" name="EMBO J.">
        <title>VIP1, an Arabidopsis protein that interacts with Agrobacterium VirE2, is involved in VirE2 nuclear import and Agrobacterium infectivity.</title>
        <authorList>
            <person name="Tzfira T."/>
            <person name="Vaidya M."/>
            <person name="Citovsky V."/>
        </authorList>
    </citation>
    <scope>FUNCTION</scope>
    <scope>INTERACTION WITH ARABIDOPSIS VIP1</scope>
    <scope>SUBCELLULAR LOCATION</scope>
</reference>
<reference key="8">
    <citation type="journal article" date="2004" name="Nature">
        <title>Involvement of targeted proteolysis in plant genetic transformation by Agrobacterium.</title>
        <authorList>
            <person name="Tzfira T."/>
            <person name="Vaidya M."/>
            <person name="Citovsky V."/>
        </authorList>
    </citation>
    <scope>PROTEASOMAL DEGRADATION MEDIATED BY VIRF</scope>
</reference>
<reference key="9">
    <citation type="journal article" date="2005" name="Proc. Natl. Acad. Sci. U.S.A.">
        <title>Uncoupling of the functions of the Arabidopsis VIP1 protein in transient and stable plant genetic transformation by Agrobacterium.</title>
        <authorList>
            <person name="Li J."/>
            <person name="Krichevsky A."/>
            <person name="Vaidya M."/>
            <person name="Tzfira T."/>
            <person name="Citovsky V."/>
        </authorList>
    </citation>
    <scope>FUNCTION</scope>
    <scope>SUBCELLULAR LOCATION</scope>
    <source>
        <strain>A208</strain>
        <strain>EHA105</strain>
    </source>
</reference>
<reference key="10">
    <citation type="journal article" date="2007" name="Plant Cell">
        <title>Arabidopsis VIRE2 INTERACTING PROTEIN2 is required for Agrobacterium T-DNA integration in plants.</title>
        <authorList>
            <person name="Anand A."/>
            <person name="Krichevsky A."/>
            <person name="Schornack S."/>
            <person name="Lahaye T."/>
            <person name="Tzfira T."/>
            <person name="Tang Y."/>
            <person name="Citovsky V."/>
            <person name="Mysore K.S."/>
        </authorList>
    </citation>
    <scope>INTERACTION WITH ARABIDOPSIS AND NICOTIANA VIP2</scope>
    <source>
        <strain>A348</strain>
    </source>
</reference>
<reference key="11">
    <citation type="journal article" date="2010" name="Cell Host Microbe">
        <title>Agrobacterium induces expression of a host F-box protein required for tumorigenicity.</title>
        <authorList>
            <person name="Zaltsman A."/>
            <person name="Krichevsky A."/>
            <person name="Loyter A."/>
            <person name="Citovsky V."/>
        </authorList>
    </citation>
    <scope>PROTEASOMAL DEGRADATION MEDIATED BY VBF</scope>
    <scope>INTERACTION WITH ARABIDOPSIS VIP1 AND VBF</scope>
</reference>
<sequence length="533" mass="60587">MDLSGNEKSRPWKKANVSSSTISDIQMTNGENLESGSPTRTEVLSPRLDDGSVDSSSSLYSGSEHGNQAEIQKELSALFSNMSLPGNDRRPDEYILVRQTGQDAFTGIAKGNLDHMPTKAEFNACCRLYRDGAGNYYPPPLAFDKISVPAQLEETWGMMEAKERNKLRFQYKLDVWNHAHADMGITGTEIFYQTDKNIKLDRNYKLRPEDRYVQTERYGRREIQKRYQHELQAGSLLPDIMIKTPKNDIHFVYRFAGDNYANKQFSEFEHTVKRRYGGETEIKLKSKSGIMHDSKYLESWERGSADIRFAEFVGENRAHNRQFPTATVNMGQQPDGQGGLTRDRHVSVEFLMQSAPNSPWAQALKKGELWDRVQLLARDGNRYLSPHRLEYSDPEHFTELMNRVGLPASMGRQSHAASIKFEKFDAQAAVIVINGPELRDIHDLSPENLQNVSTKDVIVADRNENGQRTGTYTSVAEYERLQLRLPADAAGVLGEAADKYSRDFVRPEPASRPISDSRRIYESRPRSQSVNSF</sequence>
<keyword id="KW-0192">Crown gall tumor</keyword>
<keyword id="KW-0238">DNA-binding</keyword>
<keyword id="KW-1048">Host nucleus</keyword>
<keyword id="KW-0614">Plasmid</keyword>
<keyword id="KW-0964">Secreted</keyword>
<keyword id="KW-0843">Virulence</keyword>
<evidence type="ECO:0000250" key="1"/>
<evidence type="ECO:0000256" key="2">
    <source>
        <dbReference type="SAM" id="MobiDB-lite"/>
    </source>
</evidence>
<evidence type="ECO:0000269" key="3">
    <source>
    </source>
</evidence>
<evidence type="ECO:0000269" key="4">
    <source>
    </source>
</evidence>
<evidence type="ECO:0000269" key="5">
    <source>
    </source>
</evidence>
<evidence type="ECO:0000269" key="6">
    <source>
    </source>
</evidence>
<evidence type="ECO:0000269" key="7">
    <source>
    </source>
</evidence>
<evidence type="ECO:0000269" key="8">
    <source>
    </source>
</evidence>
<comment type="function">
    <text evidence="3 4 6 8">Involved in DNA transformation; mediates the nuclear uptake of single-stranded DNA copies of the transferred DNA (T-DNA) element. Binds single-stranded but not double-stranded DNA regardless of nucleotide sequence composition.</text>
</comment>
<comment type="subunit">
    <text evidence="1 3 5 7">Forms heterodimers with the chaperone protein virE1 that prevent virE2 anarchic homopolymerization (By similarity). Interacts with A.thaliana VIP1 that mediates its translocation to the host nucleus, and with host (e.g. A.thaliana and N.benthamiana) VIP2 that promotes T-DNA integration into the host genome. Forms a complex made of VirE2, host VIP1 and VIP2, and single-stranded DNA (ssDNA). Forms a complex made of virE2 and host (e.g. A.thaliana) proteins VIP1 and VBF.</text>
</comment>
<comment type="subcellular location">
    <subcellularLocation>
        <location>Secreted</location>
    </subcellularLocation>
    <subcellularLocation>
        <location>Host nucleus</location>
    </subcellularLocation>
    <text>In infected cells, it is found in the nucleus.</text>
</comment>
<comment type="induction">
    <text>Targeted to degradation by the host proteasome by VBF and Agrobacterium virF in SCF(VBF) and SCF(COI1) E3 ubiquitin ligase complexes after mediating T-DNA translocation to the nucleus.</text>
</comment>
<geneLocation type="plasmid">
    <name>pTiA6</name>
</geneLocation>
<name>VIRE2_RHIRD</name>
<proteinExistence type="evidence at protein level"/>
<protein>
    <recommendedName>
        <fullName>Single-strand DNA-binding protein</fullName>
    </recommendedName>
</protein>
<organism>
    <name type="scientific">Rhizobium radiobacter</name>
    <name type="common">Agrobacterium tumefaciens</name>
    <name type="synonym">Agrobacterium radiobacter</name>
    <dbReference type="NCBI Taxonomy" id="358"/>
    <lineage>
        <taxon>Bacteria</taxon>
        <taxon>Pseudomonadati</taxon>
        <taxon>Pseudomonadota</taxon>
        <taxon>Alphaproteobacteria</taxon>
        <taxon>Hyphomicrobiales</taxon>
        <taxon>Rhizobiaceae</taxon>
        <taxon>Rhizobium/Agrobacterium group</taxon>
        <taxon>Agrobacterium</taxon>
        <taxon>Agrobacterium tumefaciens complex</taxon>
    </lineage>
</organism>
<dbReference type="EMBL" id="AF242881">
    <property type="protein sequence ID" value="AAF77177.1"/>
    <property type="molecule type" value="Genomic_DNA"/>
</dbReference>
<dbReference type="EMBL" id="M20143">
    <property type="protein sequence ID" value="AAA27400.1"/>
    <property type="molecule type" value="Genomic_DNA"/>
</dbReference>
<dbReference type="PIR" id="B26446">
    <property type="entry name" value="B26446"/>
</dbReference>
<dbReference type="RefSeq" id="NP_059819.1">
    <property type="nucleotide sequence ID" value="NC_002377.1"/>
</dbReference>
<dbReference type="RefSeq" id="WP_010892507.1">
    <property type="nucleotide sequence ID" value="NZ_QSNU01000012.1"/>
</dbReference>
<dbReference type="SMR" id="P0A3W8"/>
<dbReference type="TCDB" id="1.C.55.1.1">
    <property type="family name" value="the agrobacterial vire2 target host cell membrane anion channel (vire2) family"/>
</dbReference>
<dbReference type="OrthoDB" id="8290269at2"/>
<dbReference type="GO" id="GO:0005576">
    <property type="term" value="C:extracellular region"/>
    <property type="evidence" value="ECO:0007669"/>
    <property type="project" value="UniProtKB-SubCell"/>
</dbReference>
<dbReference type="GO" id="GO:0042025">
    <property type="term" value="C:host cell nucleus"/>
    <property type="evidence" value="ECO:0000314"/>
    <property type="project" value="UniProtKB"/>
</dbReference>
<dbReference type="GO" id="GO:0003677">
    <property type="term" value="F:DNA binding"/>
    <property type="evidence" value="ECO:0000314"/>
    <property type="project" value="UniProtKB"/>
</dbReference>
<dbReference type="GO" id="GO:0009294">
    <property type="term" value="P:DNA-mediated transformation"/>
    <property type="evidence" value="ECO:0000314"/>
    <property type="project" value="UniProtKB"/>
</dbReference>
<dbReference type="InterPro" id="IPR009868">
    <property type="entry name" value="VirE2"/>
</dbReference>
<dbReference type="NCBIfam" id="NF010442">
    <property type="entry name" value="PRK13868.1"/>
    <property type="match status" value="1"/>
</dbReference>
<dbReference type="Pfam" id="PF07229">
    <property type="entry name" value="VirE2"/>
    <property type="match status" value="1"/>
</dbReference>
<gene>
    <name type="primary">virE2</name>
</gene>
<accession>P0A3W8</accession>
<accession>P07544</accession>
<accession>Q9JN10</accession>